<proteinExistence type="inferred from homology"/>
<gene>
    <name evidence="1" type="primary">nrdR</name>
    <name type="ordered locus">Bphy_2448</name>
</gene>
<protein>
    <recommendedName>
        <fullName evidence="1">Transcriptional repressor NrdR</fullName>
    </recommendedName>
</protein>
<accession>B2JG93</accession>
<name>NRDR_PARP8</name>
<sequence>MRCPFCRHDDTQVVDSRVSEDGAAIRRRRRCPACDKRFTTYERVELALPSVVKKDGSRTEFDRRKIVASMQLALRKRPVAADAIDAAASRIEYQLLGSGEREVRSERLGELVMNELRALDTIAYVRFASVYRRFEDVSEFEDVIEEFRRTNAPPAAPAKPTRKR</sequence>
<keyword id="KW-0067">ATP-binding</keyword>
<keyword id="KW-0238">DNA-binding</keyword>
<keyword id="KW-0479">Metal-binding</keyword>
<keyword id="KW-0547">Nucleotide-binding</keyword>
<keyword id="KW-1185">Reference proteome</keyword>
<keyword id="KW-0678">Repressor</keyword>
<keyword id="KW-0804">Transcription</keyword>
<keyword id="KW-0805">Transcription regulation</keyword>
<keyword id="KW-0862">Zinc</keyword>
<keyword id="KW-0863">Zinc-finger</keyword>
<organism>
    <name type="scientific">Paraburkholderia phymatum (strain DSM 17167 / CIP 108236 / LMG 21445 / STM815)</name>
    <name type="common">Burkholderia phymatum</name>
    <dbReference type="NCBI Taxonomy" id="391038"/>
    <lineage>
        <taxon>Bacteria</taxon>
        <taxon>Pseudomonadati</taxon>
        <taxon>Pseudomonadota</taxon>
        <taxon>Betaproteobacteria</taxon>
        <taxon>Burkholderiales</taxon>
        <taxon>Burkholderiaceae</taxon>
        <taxon>Paraburkholderia</taxon>
    </lineage>
</organism>
<evidence type="ECO:0000255" key="1">
    <source>
        <dbReference type="HAMAP-Rule" id="MF_00440"/>
    </source>
</evidence>
<reference key="1">
    <citation type="journal article" date="2014" name="Stand. Genomic Sci.">
        <title>Complete genome sequence of Burkholderia phymatum STM815(T), a broad host range and efficient nitrogen-fixing symbiont of Mimosa species.</title>
        <authorList>
            <person name="Moulin L."/>
            <person name="Klonowska A."/>
            <person name="Caroline B."/>
            <person name="Booth K."/>
            <person name="Vriezen J.A."/>
            <person name="Melkonian R."/>
            <person name="James E.K."/>
            <person name="Young J.P."/>
            <person name="Bena G."/>
            <person name="Hauser L."/>
            <person name="Land M."/>
            <person name="Kyrpides N."/>
            <person name="Bruce D."/>
            <person name="Chain P."/>
            <person name="Copeland A."/>
            <person name="Pitluck S."/>
            <person name="Woyke T."/>
            <person name="Lizotte-Waniewski M."/>
            <person name="Bristow J."/>
            <person name="Riley M."/>
        </authorList>
    </citation>
    <scope>NUCLEOTIDE SEQUENCE [LARGE SCALE GENOMIC DNA]</scope>
    <source>
        <strain>DSM 17167 / CIP 108236 / LMG 21445 / STM815</strain>
    </source>
</reference>
<comment type="function">
    <text evidence="1">Negatively regulates transcription of bacterial ribonucleotide reductase nrd genes and operons by binding to NrdR-boxes.</text>
</comment>
<comment type="cofactor">
    <cofactor evidence="1">
        <name>Zn(2+)</name>
        <dbReference type="ChEBI" id="CHEBI:29105"/>
    </cofactor>
    <text evidence="1">Binds 1 zinc ion.</text>
</comment>
<comment type="similarity">
    <text evidence="1">Belongs to the NrdR family.</text>
</comment>
<feature type="chain" id="PRO_1000124477" description="Transcriptional repressor NrdR">
    <location>
        <begin position="1"/>
        <end position="164"/>
    </location>
</feature>
<feature type="domain" description="ATP-cone" evidence="1">
    <location>
        <begin position="49"/>
        <end position="139"/>
    </location>
</feature>
<feature type="zinc finger region" evidence="1">
    <location>
        <begin position="3"/>
        <end position="34"/>
    </location>
</feature>
<dbReference type="EMBL" id="CP001043">
    <property type="protein sequence ID" value="ACC71621.1"/>
    <property type="molecule type" value="Genomic_DNA"/>
</dbReference>
<dbReference type="RefSeq" id="WP_012401825.1">
    <property type="nucleotide sequence ID" value="NC_010622.1"/>
</dbReference>
<dbReference type="SMR" id="B2JG93"/>
<dbReference type="STRING" id="391038.Bphy_2448"/>
<dbReference type="KEGG" id="bph:Bphy_2448"/>
<dbReference type="eggNOG" id="COG1327">
    <property type="taxonomic scope" value="Bacteria"/>
</dbReference>
<dbReference type="HOGENOM" id="CLU_108412_0_1_4"/>
<dbReference type="OrthoDB" id="9807461at2"/>
<dbReference type="Proteomes" id="UP000001192">
    <property type="component" value="Chromosome 1"/>
</dbReference>
<dbReference type="GO" id="GO:0005524">
    <property type="term" value="F:ATP binding"/>
    <property type="evidence" value="ECO:0007669"/>
    <property type="project" value="UniProtKB-KW"/>
</dbReference>
<dbReference type="GO" id="GO:0003677">
    <property type="term" value="F:DNA binding"/>
    <property type="evidence" value="ECO:0007669"/>
    <property type="project" value="UniProtKB-KW"/>
</dbReference>
<dbReference type="GO" id="GO:0008270">
    <property type="term" value="F:zinc ion binding"/>
    <property type="evidence" value="ECO:0007669"/>
    <property type="project" value="UniProtKB-UniRule"/>
</dbReference>
<dbReference type="GO" id="GO:0045892">
    <property type="term" value="P:negative regulation of DNA-templated transcription"/>
    <property type="evidence" value="ECO:0007669"/>
    <property type="project" value="UniProtKB-UniRule"/>
</dbReference>
<dbReference type="HAMAP" id="MF_00440">
    <property type="entry name" value="NrdR"/>
    <property type="match status" value="1"/>
</dbReference>
<dbReference type="InterPro" id="IPR005144">
    <property type="entry name" value="ATP-cone_dom"/>
</dbReference>
<dbReference type="InterPro" id="IPR055173">
    <property type="entry name" value="NrdR-like_N"/>
</dbReference>
<dbReference type="InterPro" id="IPR003796">
    <property type="entry name" value="RNR_NrdR-like"/>
</dbReference>
<dbReference type="NCBIfam" id="TIGR00244">
    <property type="entry name" value="transcriptional regulator NrdR"/>
    <property type="match status" value="1"/>
</dbReference>
<dbReference type="PANTHER" id="PTHR30455">
    <property type="entry name" value="TRANSCRIPTIONAL REPRESSOR NRDR"/>
    <property type="match status" value="1"/>
</dbReference>
<dbReference type="PANTHER" id="PTHR30455:SF2">
    <property type="entry name" value="TRANSCRIPTIONAL REPRESSOR NRDR"/>
    <property type="match status" value="1"/>
</dbReference>
<dbReference type="Pfam" id="PF03477">
    <property type="entry name" value="ATP-cone"/>
    <property type="match status" value="1"/>
</dbReference>
<dbReference type="Pfam" id="PF22811">
    <property type="entry name" value="Zn_ribbon_NrdR"/>
    <property type="match status" value="1"/>
</dbReference>
<dbReference type="PROSITE" id="PS51161">
    <property type="entry name" value="ATP_CONE"/>
    <property type="match status" value="1"/>
</dbReference>